<protein>
    <recommendedName>
        <fullName evidence="1">Phosphopentomutase</fullName>
        <ecNumber evidence="1">5.4.2.7</ecNumber>
    </recommendedName>
    <alternativeName>
        <fullName evidence="1">Phosphodeoxyribomutase</fullName>
    </alternativeName>
</protein>
<keyword id="KW-0963">Cytoplasm</keyword>
<keyword id="KW-0413">Isomerase</keyword>
<keyword id="KW-0464">Manganese</keyword>
<keyword id="KW-0479">Metal-binding</keyword>
<proteinExistence type="inferred from homology"/>
<gene>
    <name evidence="1" type="primary">deoB</name>
    <name type="ordered locus">SNSL254_A4925</name>
</gene>
<sequence length="407" mass="44244">MKRAFIMVLDSFGIGATEDADRFGDVGSDTLGHIAEACAKGEADNGRKGPLNLPNLTRLGLVKAHEGSTGKIAAGMDGNADVIGAYAWAHELSSGKDTPSGHWEIAGVPVLFDWGYFSDHENSFPQELLDKLVKRANLPGYLGNCHSSGTVILDQLGEEHMKTGKPIFYTSADSVFQIACHEETFGLDKLYELCEIAREELTEGGYNIGRVIARPFIGDKAGNFQRTGNRHDLAVEPPAPTVLQKLVDEKQGHVVSVGKIADIYANCGITKKVKATGLDALFDATLKEMKEAGDKTIVFTNFVDFDSSWGHRRDIAGYAAGLELFDRRLPELMELVGEDDILILTADHGCDPSWTGTDHTREHIPVLIYGPKVKPGSLGHRETFADIGQTLATYFGTSPMDYGKNML</sequence>
<dbReference type="EC" id="5.4.2.7" evidence="1"/>
<dbReference type="EMBL" id="CP001113">
    <property type="protein sequence ID" value="ACF64142.1"/>
    <property type="molecule type" value="Genomic_DNA"/>
</dbReference>
<dbReference type="RefSeq" id="WP_000816454.1">
    <property type="nucleotide sequence ID" value="NZ_CCMR01000003.1"/>
</dbReference>
<dbReference type="SMR" id="B4T4H2"/>
<dbReference type="KEGG" id="see:SNSL254_A4925"/>
<dbReference type="HOGENOM" id="CLU_053861_0_0_6"/>
<dbReference type="UniPathway" id="UPA00002">
    <property type="reaction ID" value="UER00467"/>
</dbReference>
<dbReference type="Proteomes" id="UP000008824">
    <property type="component" value="Chromosome"/>
</dbReference>
<dbReference type="GO" id="GO:0005829">
    <property type="term" value="C:cytosol"/>
    <property type="evidence" value="ECO:0007669"/>
    <property type="project" value="TreeGrafter"/>
</dbReference>
<dbReference type="GO" id="GO:0000287">
    <property type="term" value="F:magnesium ion binding"/>
    <property type="evidence" value="ECO:0007669"/>
    <property type="project" value="InterPro"/>
</dbReference>
<dbReference type="GO" id="GO:0030145">
    <property type="term" value="F:manganese ion binding"/>
    <property type="evidence" value="ECO:0007669"/>
    <property type="project" value="UniProtKB-UniRule"/>
</dbReference>
<dbReference type="GO" id="GO:0008973">
    <property type="term" value="F:phosphopentomutase activity"/>
    <property type="evidence" value="ECO:0007669"/>
    <property type="project" value="UniProtKB-UniRule"/>
</dbReference>
<dbReference type="GO" id="GO:0006018">
    <property type="term" value="P:2-deoxyribose 1-phosphate catabolic process"/>
    <property type="evidence" value="ECO:0007669"/>
    <property type="project" value="UniProtKB-UniRule"/>
</dbReference>
<dbReference type="GO" id="GO:0006015">
    <property type="term" value="P:5-phosphoribose 1-diphosphate biosynthetic process"/>
    <property type="evidence" value="ECO:0007669"/>
    <property type="project" value="UniProtKB-UniPathway"/>
</dbReference>
<dbReference type="GO" id="GO:0043094">
    <property type="term" value="P:metabolic compound salvage"/>
    <property type="evidence" value="ECO:0007669"/>
    <property type="project" value="InterPro"/>
</dbReference>
<dbReference type="GO" id="GO:0009117">
    <property type="term" value="P:nucleotide metabolic process"/>
    <property type="evidence" value="ECO:0007669"/>
    <property type="project" value="InterPro"/>
</dbReference>
<dbReference type="CDD" id="cd16009">
    <property type="entry name" value="PPM"/>
    <property type="match status" value="1"/>
</dbReference>
<dbReference type="FunFam" id="3.30.70.1250:FF:000001">
    <property type="entry name" value="Phosphopentomutase"/>
    <property type="match status" value="1"/>
</dbReference>
<dbReference type="Gene3D" id="3.40.720.10">
    <property type="entry name" value="Alkaline Phosphatase, subunit A"/>
    <property type="match status" value="1"/>
</dbReference>
<dbReference type="Gene3D" id="3.30.70.1250">
    <property type="entry name" value="Phosphopentomutase"/>
    <property type="match status" value="1"/>
</dbReference>
<dbReference type="HAMAP" id="MF_00740">
    <property type="entry name" value="Phosphopentomut"/>
    <property type="match status" value="1"/>
</dbReference>
<dbReference type="InterPro" id="IPR017850">
    <property type="entry name" value="Alkaline_phosphatase_core_sf"/>
</dbReference>
<dbReference type="InterPro" id="IPR010045">
    <property type="entry name" value="DeoB"/>
</dbReference>
<dbReference type="InterPro" id="IPR006124">
    <property type="entry name" value="Metalloenzyme"/>
</dbReference>
<dbReference type="InterPro" id="IPR024052">
    <property type="entry name" value="Phosphopentomutase_DeoB_cap_sf"/>
</dbReference>
<dbReference type="NCBIfam" id="TIGR01696">
    <property type="entry name" value="deoB"/>
    <property type="match status" value="1"/>
</dbReference>
<dbReference type="NCBIfam" id="NF003766">
    <property type="entry name" value="PRK05362.1"/>
    <property type="match status" value="1"/>
</dbReference>
<dbReference type="PANTHER" id="PTHR21110">
    <property type="entry name" value="PHOSPHOPENTOMUTASE"/>
    <property type="match status" value="1"/>
</dbReference>
<dbReference type="PANTHER" id="PTHR21110:SF0">
    <property type="entry name" value="PHOSPHOPENTOMUTASE"/>
    <property type="match status" value="1"/>
</dbReference>
<dbReference type="Pfam" id="PF01676">
    <property type="entry name" value="Metalloenzyme"/>
    <property type="match status" value="1"/>
</dbReference>
<dbReference type="PIRSF" id="PIRSF001491">
    <property type="entry name" value="Ppentomutase"/>
    <property type="match status" value="1"/>
</dbReference>
<dbReference type="SUPFAM" id="SSF53649">
    <property type="entry name" value="Alkaline phosphatase-like"/>
    <property type="match status" value="1"/>
</dbReference>
<dbReference type="SUPFAM" id="SSF143856">
    <property type="entry name" value="DeoB insert domain-like"/>
    <property type="match status" value="1"/>
</dbReference>
<name>DEOB_SALNS</name>
<accession>B4T4H2</accession>
<feature type="chain" id="PRO_1000133097" description="Phosphopentomutase">
    <location>
        <begin position="1"/>
        <end position="407"/>
    </location>
</feature>
<feature type="binding site" evidence="1">
    <location>
        <position position="10"/>
    </location>
    <ligand>
        <name>Mn(2+)</name>
        <dbReference type="ChEBI" id="CHEBI:29035"/>
        <label>1</label>
    </ligand>
</feature>
<feature type="binding site" evidence="1">
    <location>
        <position position="306"/>
    </location>
    <ligand>
        <name>Mn(2+)</name>
        <dbReference type="ChEBI" id="CHEBI:29035"/>
        <label>2</label>
    </ligand>
</feature>
<feature type="binding site" evidence="1">
    <location>
        <position position="311"/>
    </location>
    <ligand>
        <name>Mn(2+)</name>
        <dbReference type="ChEBI" id="CHEBI:29035"/>
        <label>2</label>
    </ligand>
</feature>
<feature type="binding site" evidence="1">
    <location>
        <position position="347"/>
    </location>
    <ligand>
        <name>Mn(2+)</name>
        <dbReference type="ChEBI" id="CHEBI:29035"/>
        <label>1</label>
    </ligand>
</feature>
<feature type="binding site" evidence="1">
    <location>
        <position position="348"/>
    </location>
    <ligand>
        <name>Mn(2+)</name>
        <dbReference type="ChEBI" id="CHEBI:29035"/>
        <label>1</label>
    </ligand>
</feature>
<feature type="binding site" evidence="1">
    <location>
        <position position="359"/>
    </location>
    <ligand>
        <name>Mn(2+)</name>
        <dbReference type="ChEBI" id="CHEBI:29035"/>
        <label>2</label>
    </ligand>
</feature>
<organism>
    <name type="scientific">Salmonella newport (strain SL254)</name>
    <dbReference type="NCBI Taxonomy" id="423368"/>
    <lineage>
        <taxon>Bacteria</taxon>
        <taxon>Pseudomonadati</taxon>
        <taxon>Pseudomonadota</taxon>
        <taxon>Gammaproteobacteria</taxon>
        <taxon>Enterobacterales</taxon>
        <taxon>Enterobacteriaceae</taxon>
        <taxon>Salmonella</taxon>
    </lineage>
</organism>
<reference key="1">
    <citation type="journal article" date="2011" name="J. Bacteriol.">
        <title>Comparative genomics of 28 Salmonella enterica isolates: evidence for CRISPR-mediated adaptive sublineage evolution.</title>
        <authorList>
            <person name="Fricke W.F."/>
            <person name="Mammel M.K."/>
            <person name="McDermott P.F."/>
            <person name="Tartera C."/>
            <person name="White D.G."/>
            <person name="Leclerc J.E."/>
            <person name="Ravel J."/>
            <person name="Cebula T.A."/>
        </authorList>
    </citation>
    <scope>NUCLEOTIDE SEQUENCE [LARGE SCALE GENOMIC DNA]</scope>
    <source>
        <strain>SL254</strain>
    </source>
</reference>
<comment type="function">
    <text evidence="1">Isomerase that catalyzes the conversion of deoxy-ribose 1-phosphate (dRib-1-P) and ribose 1-phosphate (Rib-1-P) to deoxy-ribose 5-phosphate (dRib-5-P) and ribose 5-phosphate (Rib-5-P), respectively.</text>
</comment>
<comment type="catalytic activity">
    <reaction evidence="1">
        <text>2-deoxy-alpha-D-ribose 1-phosphate = 2-deoxy-D-ribose 5-phosphate</text>
        <dbReference type="Rhea" id="RHEA:27658"/>
        <dbReference type="ChEBI" id="CHEBI:57259"/>
        <dbReference type="ChEBI" id="CHEBI:62877"/>
        <dbReference type="EC" id="5.4.2.7"/>
    </reaction>
</comment>
<comment type="catalytic activity">
    <reaction evidence="1">
        <text>alpha-D-ribose 1-phosphate = D-ribose 5-phosphate</text>
        <dbReference type="Rhea" id="RHEA:18793"/>
        <dbReference type="ChEBI" id="CHEBI:57720"/>
        <dbReference type="ChEBI" id="CHEBI:78346"/>
        <dbReference type="EC" id="5.4.2.7"/>
    </reaction>
</comment>
<comment type="cofactor">
    <cofactor evidence="1">
        <name>Mn(2+)</name>
        <dbReference type="ChEBI" id="CHEBI:29035"/>
    </cofactor>
    <text evidence="1">Binds 2 manganese ions.</text>
</comment>
<comment type="pathway">
    <text evidence="1">Carbohydrate degradation; 2-deoxy-D-ribose 1-phosphate degradation; D-glyceraldehyde 3-phosphate and acetaldehyde from 2-deoxy-alpha-D-ribose 1-phosphate: step 1/2.</text>
</comment>
<comment type="subcellular location">
    <subcellularLocation>
        <location evidence="1">Cytoplasm</location>
    </subcellularLocation>
</comment>
<comment type="similarity">
    <text evidence="1">Belongs to the phosphopentomutase family.</text>
</comment>
<evidence type="ECO:0000255" key="1">
    <source>
        <dbReference type="HAMAP-Rule" id="MF_00740"/>
    </source>
</evidence>